<proteinExistence type="inferred from homology"/>
<feature type="chain" id="PRO_0000309401" description="UPF0502 protein PSHAa0076">
    <location>
        <begin position="1"/>
        <end position="209"/>
    </location>
</feature>
<dbReference type="EMBL" id="CR954246">
    <property type="protein sequence ID" value="CAI85185.1"/>
    <property type="molecule type" value="Genomic_DNA"/>
</dbReference>
<dbReference type="SMR" id="Q3IF86"/>
<dbReference type="STRING" id="326442.PSHAa0076"/>
<dbReference type="KEGG" id="pha:PSHAa0076"/>
<dbReference type="PATRIC" id="fig|326442.8.peg.75"/>
<dbReference type="eggNOG" id="COG3132">
    <property type="taxonomic scope" value="Bacteria"/>
</dbReference>
<dbReference type="HOGENOM" id="CLU_057831_2_0_6"/>
<dbReference type="BioCyc" id="PHAL326442:PSHA_RS00390-MONOMER"/>
<dbReference type="Proteomes" id="UP000006843">
    <property type="component" value="Chromosome I"/>
</dbReference>
<dbReference type="Gene3D" id="1.10.10.10">
    <property type="entry name" value="Winged helix-like DNA-binding domain superfamily/Winged helix DNA-binding domain"/>
    <property type="match status" value="2"/>
</dbReference>
<dbReference type="HAMAP" id="MF_01584">
    <property type="entry name" value="UPF0502"/>
    <property type="match status" value="1"/>
</dbReference>
<dbReference type="InterPro" id="IPR007432">
    <property type="entry name" value="DUF480"/>
</dbReference>
<dbReference type="InterPro" id="IPR036388">
    <property type="entry name" value="WH-like_DNA-bd_sf"/>
</dbReference>
<dbReference type="InterPro" id="IPR036390">
    <property type="entry name" value="WH_DNA-bd_sf"/>
</dbReference>
<dbReference type="PANTHER" id="PTHR38768">
    <property type="entry name" value="UPF0502 PROTEIN YCEH"/>
    <property type="match status" value="1"/>
</dbReference>
<dbReference type="PANTHER" id="PTHR38768:SF1">
    <property type="entry name" value="UPF0502 PROTEIN YCEH"/>
    <property type="match status" value="1"/>
</dbReference>
<dbReference type="Pfam" id="PF04337">
    <property type="entry name" value="DUF480"/>
    <property type="match status" value="1"/>
</dbReference>
<dbReference type="SUPFAM" id="SSF46785">
    <property type="entry name" value="Winged helix' DNA-binding domain"/>
    <property type="match status" value="2"/>
</dbReference>
<reference key="1">
    <citation type="journal article" date="2005" name="Genome Res.">
        <title>Coping with cold: the genome of the versatile marine Antarctica bacterium Pseudoalteromonas haloplanktis TAC125.</title>
        <authorList>
            <person name="Medigue C."/>
            <person name="Krin E."/>
            <person name="Pascal G."/>
            <person name="Barbe V."/>
            <person name="Bernsel A."/>
            <person name="Bertin P.N."/>
            <person name="Cheung F."/>
            <person name="Cruveiller S."/>
            <person name="D'Amico S."/>
            <person name="Duilio A."/>
            <person name="Fang G."/>
            <person name="Feller G."/>
            <person name="Ho C."/>
            <person name="Mangenot S."/>
            <person name="Marino G."/>
            <person name="Nilsson J."/>
            <person name="Parrilli E."/>
            <person name="Rocha E.P.C."/>
            <person name="Rouy Z."/>
            <person name="Sekowska A."/>
            <person name="Tutino M.L."/>
            <person name="Vallenet D."/>
            <person name="von Heijne G."/>
            <person name="Danchin A."/>
        </authorList>
    </citation>
    <scope>NUCLEOTIDE SEQUENCE [LARGE SCALE GENOMIC DNA]</scope>
    <source>
        <strain>TAC 125</strain>
    </source>
</reference>
<comment type="similarity">
    <text evidence="1">Belongs to the UPF0502 family.</text>
</comment>
<name>Y076_PSET1</name>
<gene>
    <name type="ordered locus">PSHAa0076</name>
</gene>
<keyword id="KW-1185">Reference proteome</keyword>
<sequence length="209" mass="23424">MQLSANQQRIIGCLLEKQSTTPEHYPLSLNALTNACNQKSNRAPVLNLTDSEVQIALDELINARLVTIDEGLSGRVNKYDHRFCNTEFSSLKFSAQQRAIICLLLLRGAQTPGELKTRCARLANFNSVDDVELALNKLIESDIVTKLAREPGKRDCRYMHLLGEQPISEITRPAEQATDELKSEELNELLAEVDELKTELQKIKAHLGL</sequence>
<evidence type="ECO:0000255" key="1">
    <source>
        <dbReference type="HAMAP-Rule" id="MF_01584"/>
    </source>
</evidence>
<organism>
    <name type="scientific">Pseudoalteromonas translucida (strain TAC 125)</name>
    <dbReference type="NCBI Taxonomy" id="326442"/>
    <lineage>
        <taxon>Bacteria</taxon>
        <taxon>Pseudomonadati</taxon>
        <taxon>Pseudomonadota</taxon>
        <taxon>Gammaproteobacteria</taxon>
        <taxon>Alteromonadales</taxon>
        <taxon>Pseudoalteromonadaceae</taxon>
        <taxon>Pseudoalteromonas</taxon>
    </lineage>
</organism>
<accession>Q3IF86</accession>
<protein>
    <recommendedName>
        <fullName evidence="1">UPF0502 protein PSHAa0076</fullName>
    </recommendedName>
</protein>